<organism>
    <name type="scientific">Mycobacterium ulcerans (strain Agy99)</name>
    <dbReference type="NCBI Taxonomy" id="362242"/>
    <lineage>
        <taxon>Bacteria</taxon>
        <taxon>Bacillati</taxon>
        <taxon>Actinomycetota</taxon>
        <taxon>Actinomycetes</taxon>
        <taxon>Mycobacteriales</taxon>
        <taxon>Mycobacteriaceae</taxon>
        <taxon>Mycobacterium</taxon>
        <taxon>Mycobacterium ulcerans group</taxon>
    </lineage>
</organism>
<feature type="chain" id="PRO_0000284246" description="Endoribonuclease YbeY">
    <location>
        <begin position="1"/>
        <end position="178"/>
    </location>
</feature>
<feature type="region of interest" description="Disordered" evidence="2">
    <location>
        <begin position="156"/>
        <end position="178"/>
    </location>
</feature>
<feature type="compositionally biased region" description="Basic and acidic residues" evidence="2">
    <location>
        <begin position="159"/>
        <end position="178"/>
    </location>
</feature>
<feature type="binding site" evidence="1">
    <location>
        <position position="118"/>
    </location>
    <ligand>
        <name>Zn(2+)</name>
        <dbReference type="ChEBI" id="CHEBI:29105"/>
        <note>catalytic</note>
    </ligand>
</feature>
<feature type="binding site" evidence="1">
    <location>
        <position position="122"/>
    </location>
    <ligand>
        <name>Zn(2+)</name>
        <dbReference type="ChEBI" id="CHEBI:29105"/>
        <note>catalytic</note>
    </ligand>
</feature>
<feature type="binding site" evidence="1">
    <location>
        <position position="128"/>
    </location>
    <ligand>
        <name>Zn(2+)</name>
        <dbReference type="ChEBI" id="CHEBI:29105"/>
        <note>catalytic</note>
    </ligand>
</feature>
<gene>
    <name evidence="1" type="primary">ybeY</name>
    <name type="ordered locus">MUL_3620</name>
</gene>
<proteinExistence type="inferred from homology"/>
<protein>
    <recommendedName>
        <fullName evidence="1">Endoribonuclease YbeY</fullName>
        <ecNumber evidence="1">3.1.-.-</ecNumber>
    </recommendedName>
</protein>
<keyword id="KW-0963">Cytoplasm</keyword>
<keyword id="KW-0255">Endonuclease</keyword>
<keyword id="KW-0378">Hydrolase</keyword>
<keyword id="KW-0479">Metal-binding</keyword>
<keyword id="KW-0540">Nuclease</keyword>
<keyword id="KW-0690">Ribosome biogenesis</keyword>
<keyword id="KW-0698">rRNA processing</keyword>
<keyword id="KW-0862">Zinc</keyword>
<name>YBEY_MYCUA</name>
<reference key="1">
    <citation type="journal article" date="2007" name="Genome Res.">
        <title>Reductive evolution and niche adaptation inferred from the genome of Mycobacterium ulcerans, the causative agent of Buruli ulcer.</title>
        <authorList>
            <person name="Stinear T.P."/>
            <person name="Seemann T."/>
            <person name="Pidot S."/>
            <person name="Frigui W."/>
            <person name="Reysset G."/>
            <person name="Garnier T."/>
            <person name="Meurice G."/>
            <person name="Simon D."/>
            <person name="Bouchier C."/>
            <person name="Ma L."/>
            <person name="Tichit M."/>
            <person name="Porter J.L."/>
            <person name="Ryan J."/>
            <person name="Johnson P.D.R."/>
            <person name="Davies J.K."/>
            <person name="Jenkin G.A."/>
            <person name="Small P.L.C."/>
            <person name="Jones L.M."/>
            <person name="Tekaia F."/>
            <person name="Laval F."/>
            <person name="Daffe M."/>
            <person name="Parkhill J."/>
            <person name="Cole S.T."/>
        </authorList>
    </citation>
    <scope>NUCLEOTIDE SEQUENCE [LARGE SCALE GENOMIC DNA]</scope>
    <source>
        <strain>Agy99</strain>
    </source>
</reference>
<accession>A0PTT6</accession>
<sequence length="178" mass="19743">MSIEVSNESGIDVSETELVSVARFVIGKMDVNPGAELSMVLLDTAAMADLHMRWMDLPGPTDVMSFPMDELEPGGRPDAPEPGPAMLGDIVLCPEFAAEQAAAAGHSLGHELALLTIHGVLHLLGYDHGEPDEEKEMFALQDRLLEEWVAEQVQAYQQDRQDERDRRLLDKSRYFDEP</sequence>
<dbReference type="EC" id="3.1.-.-" evidence="1"/>
<dbReference type="EMBL" id="CP000325">
    <property type="protein sequence ID" value="ABL05755.1"/>
    <property type="molecule type" value="Genomic_DNA"/>
</dbReference>
<dbReference type="RefSeq" id="WP_011741360.1">
    <property type="nucleotide sequence ID" value="NC_008611.1"/>
</dbReference>
<dbReference type="SMR" id="A0PTT6"/>
<dbReference type="GeneID" id="93438022"/>
<dbReference type="KEGG" id="mul:MUL_3620"/>
<dbReference type="eggNOG" id="COG0319">
    <property type="taxonomic scope" value="Bacteria"/>
</dbReference>
<dbReference type="HOGENOM" id="CLU_106710_3_2_11"/>
<dbReference type="Proteomes" id="UP000000765">
    <property type="component" value="Chromosome"/>
</dbReference>
<dbReference type="GO" id="GO:0005737">
    <property type="term" value="C:cytoplasm"/>
    <property type="evidence" value="ECO:0007669"/>
    <property type="project" value="UniProtKB-SubCell"/>
</dbReference>
<dbReference type="GO" id="GO:0004222">
    <property type="term" value="F:metalloendopeptidase activity"/>
    <property type="evidence" value="ECO:0007669"/>
    <property type="project" value="InterPro"/>
</dbReference>
<dbReference type="GO" id="GO:0004521">
    <property type="term" value="F:RNA endonuclease activity"/>
    <property type="evidence" value="ECO:0007669"/>
    <property type="project" value="UniProtKB-UniRule"/>
</dbReference>
<dbReference type="GO" id="GO:0008270">
    <property type="term" value="F:zinc ion binding"/>
    <property type="evidence" value="ECO:0007669"/>
    <property type="project" value="UniProtKB-UniRule"/>
</dbReference>
<dbReference type="GO" id="GO:0006364">
    <property type="term" value="P:rRNA processing"/>
    <property type="evidence" value="ECO:0007669"/>
    <property type="project" value="UniProtKB-UniRule"/>
</dbReference>
<dbReference type="Gene3D" id="3.40.390.30">
    <property type="entry name" value="Metalloproteases ('zincins'), catalytic domain"/>
    <property type="match status" value="1"/>
</dbReference>
<dbReference type="HAMAP" id="MF_00009">
    <property type="entry name" value="Endoribonucl_YbeY"/>
    <property type="match status" value="1"/>
</dbReference>
<dbReference type="InterPro" id="IPR023091">
    <property type="entry name" value="MetalPrtase_cat_dom_sf_prd"/>
</dbReference>
<dbReference type="InterPro" id="IPR002036">
    <property type="entry name" value="YbeY"/>
</dbReference>
<dbReference type="InterPro" id="IPR020549">
    <property type="entry name" value="YbeY_CS"/>
</dbReference>
<dbReference type="NCBIfam" id="TIGR00043">
    <property type="entry name" value="rRNA maturation RNase YbeY"/>
    <property type="match status" value="1"/>
</dbReference>
<dbReference type="PANTHER" id="PTHR46986">
    <property type="entry name" value="ENDORIBONUCLEASE YBEY, CHLOROPLASTIC"/>
    <property type="match status" value="1"/>
</dbReference>
<dbReference type="PANTHER" id="PTHR46986:SF1">
    <property type="entry name" value="ENDORIBONUCLEASE YBEY, CHLOROPLASTIC"/>
    <property type="match status" value="1"/>
</dbReference>
<dbReference type="Pfam" id="PF02130">
    <property type="entry name" value="YbeY"/>
    <property type="match status" value="1"/>
</dbReference>
<dbReference type="SUPFAM" id="SSF55486">
    <property type="entry name" value="Metalloproteases ('zincins'), catalytic domain"/>
    <property type="match status" value="1"/>
</dbReference>
<dbReference type="PROSITE" id="PS01306">
    <property type="entry name" value="UPF0054"/>
    <property type="match status" value="1"/>
</dbReference>
<evidence type="ECO:0000255" key="1">
    <source>
        <dbReference type="HAMAP-Rule" id="MF_00009"/>
    </source>
</evidence>
<evidence type="ECO:0000256" key="2">
    <source>
        <dbReference type="SAM" id="MobiDB-lite"/>
    </source>
</evidence>
<comment type="function">
    <text evidence="1">Single strand-specific metallo-endoribonuclease involved in late-stage 70S ribosome quality control and in maturation of the 3' terminus of the 16S rRNA.</text>
</comment>
<comment type="cofactor">
    <cofactor evidence="1">
        <name>Zn(2+)</name>
        <dbReference type="ChEBI" id="CHEBI:29105"/>
    </cofactor>
    <text evidence="1">Binds 1 zinc ion.</text>
</comment>
<comment type="subcellular location">
    <subcellularLocation>
        <location evidence="1">Cytoplasm</location>
    </subcellularLocation>
</comment>
<comment type="similarity">
    <text evidence="1">Belongs to the endoribonuclease YbeY family.</text>
</comment>